<comment type="function">
    <text evidence="1">Binds directly to 23S ribosomal RNA and is necessary for the in vitro assembly process of the 50S ribosomal subunit. It is not involved in the protein synthesizing functions of that subunit.</text>
</comment>
<comment type="similarity">
    <text evidence="1">Belongs to the bacterial ribosomal protein bL20 family.</text>
</comment>
<organism>
    <name type="scientific">Fervidobacterium nodosum (strain ATCC 35602 / DSM 5306 / Rt17-B1)</name>
    <dbReference type="NCBI Taxonomy" id="381764"/>
    <lineage>
        <taxon>Bacteria</taxon>
        <taxon>Thermotogati</taxon>
        <taxon>Thermotogota</taxon>
        <taxon>Thermotogae</taxon>
        <taxon>Thermotogales</taxon>
        <taxon>Fervidobacteriaceae</taxon>
        <taxon>Fervidobacterium</taxon>
    </lineage>
</organism>
<name>RL20_FERNB</name>
<dbReference type="EMBL" id="CP000771">
    <property type="protein sequence ID" value="ABS60517.1"/>
    <property type="molecule type" value="Genomic_DNA"/>
</dbReference>
<dbReference type="RefSeq" id="WP_011993836.1">
    <property type="nucleotide sequence ID" value="NC_009718.1"/>
</dbReference>
<dbReference type="SMR" id="A7HKT4"/>
<dbReference type="STRING" id="381764.Fnod_0662"/>
<dbReference type="KEGG" id="fno:Fnod_0662"/>
<dbReference type="eggNOG" id="COG0292">
    <property type="taxonomic scope" value="Bacteria"/>
</dbReference>
<dbReference type="HOGENOM" id="CLU_123265_0_1_0"/>
<dbReference type="OrthoDB" id="9808966at2"/>
<dbReference type="Proteomes" id="UP000002415">
    <property type="component" value="Chromosome"/>
</dbReference>
<dbReference type="GO" id="GO:1990904">
    <property type="term" value="C:ribonucleoprotein complex"/>
    <property type="evidence" value="ECO:0007669"/>
    <property type="project" value="UniProtKB-KW"/>
</dbReference>
<dbReference type="GO" id="GO:0005840">
    <property type="term" value="C:ribosome"/>
    <property type="evidence" value="ECO:0007669"/>
    <property type="project" value="UniProtKB-KW"/>
</dbReference>
<dbReference type="GO" id="GO:0019843">
    <property type="term" value="F:rRNA binding"/>
    <property type="evidence" value="ECO:0007669"/>
    <property type="project" value="UniProtKB-UniRule"/>
</dbReference>
<dbReference type="GO" id="GO:0003735">
    <property type="term" value="F:structural constituent of ribosome"/>
    <property type="evidence" value="ECO:0007669"/>
    <property type="project" value="InterPro"/>
</dbReference>
<dbReference type="GO" id="GO:0000027">
    <property type="term" value="P:ribosomal large subunit assembly"/>
    <property type="evidence" value="ECO:0007669"/>
    <property type="project" value="UniProtKB-UniRule"/>
</dbReference>
<dbReference type="GO" id="GO:0006412">
    <property type="term" value="P:translation"/>
    <property type="evidence" value="ECO:0007669"/>
    <property type="project" value="InterPro"/>
</dbReference>
<dbReference type="CDD" id="cd07026">
    <property type="entry name" value="Ribosomal_L20"/>
    <property type="match status" value="1"/>
</dbReference>
<dbReference type="FunFam" id="1.10.1900.20:FF:000001">
    <property type="entry name" value="50S ribosomal protein L20"/>
    <property type="match status" value="1"/>
</dbReference>
<dbReference type="Gene3D" id="6.10.160.10">
    <property type="match status" value="1"/>
</dbReference>
<dbReference type="Gene3D" id="1.10.1900.20">
    <property type="entry name" value="Ribosomal protein L20"/>
    <property type="match status" value="1"/>
</dbReference>
<dbReference type="HAMAP" id="MF_00382">
    <property type="entry name" value="Ribosomal_bL20"/>
    <property type="match status" value="1"/>
</dbReference>
<dbReference type="InterPro" id="IPR005813">
    <property type="entry name" value="Ribosomal_bL20"/>
</dbReference>
<dbReference type="InterPro" id="IPR049946">
    <property type="entry name" value="RIBOSOMAL_L20_CS"/>
</dbReference>
<dbReference type="InterPro" id="IPR035566">
    <property type="entry name" value="Ribosomal_protein_bL20_C"/>
</dbReference>
<dbReference type="NCBIfam" id="TIGR01032">
    <property type="entry name" value="rplT_bact"/>
    <property type="match status" value="1"/>
</dbReference>
<dbReference type="PANTHER" id="PTHR10986">
    <property type="entry name" value="39S RIBOSOMAL PROTEIN L20"/>
    <property type="match status" value="1"/>
</dbReference>
<dbReference type="Pfam" id="PF00453">
    <property type="entry name" value="Ribosomal_L20"/>
    <property type="match status" value="1"/>
</dbReference>
<dbReference type="PRINTS" id="PR00062">
    <property type="entry name" value="RIBOSOMALL20"/>
</dbReference>
<dbReference type="SUPFAM" id="SSF74731">
    <property type="entry name" value="Ribosomal protein L20"/>
    <property type="match status" value="1"/>
</dbReference>
<dbReference type="PROSITE" id="PS00937">
    <property type="entry name" value="RIBOSOMAL_L20"/>
    <property type="match status" value="1"/>
</dbReference>
<sequence length="118" mass="13627">MRVKNAVNSKKKKKKILKFVKGFRGALRRRYSLAKQSYYRALKFAFDGRRNKKGNFRKIWITRINIAARNAGLKYNELIHGLKLANVAINRKMLAELAVNDPESFKEYVNIAKAALGK</sequence>
<accession>A7HKT4</accession>
<protein>
    <recommendedName>
        <fullName evidence="1">Large ribosomal subunit protein bL20</fullName>
    </recommendedName>
    <alternativeName>
        <fullName evidence="2">50S ribosomal protein L20</fullName>
    </alternativeName>
</protein>
<reference key="1">
    <citation type="submission" date="2007-07" db="EMBL/GenBank/DDBJ databases">
        <title>Complete sequence of Fervidobacterium nodosum Rt17-B1.</title>
        <authorList>
            <consortium name="US DOE Joint Genome Institute"/>
            <person name="Copeland A."/>
            <person name="Lucas S."/>
            <person name="Lapidus A."/>
            <person name="Barry K."/>
            <person name="Glavina del Rio T."/>
            <person name="Dalin E."/>
            <person name="Tice H."/>
            <person name="Pitluck S."/>
            <person name="Saunders E."/>
            <person name="Brettin T."/>
            <person name="Bruce D."/>
            <person name="Detter J.C."/>
            <person name="Han C."/>
            <person name="Schmutz J."/>
            <person name="Larimer F."/>
            <person name="Land M."/>
            <person name="Hauser L."/>
            <person name="Kyrpides N."/>
            <person name="Mikhailova N."/>
            <person name="Nelson K."/>
            <person name="Gogarten J.P."/>
            <person name="Noll K."/>
            <person name="Richardson P."/>
        </authorList>
    </citation>
    <scope>NUCLEOTIDE SEQUENCE [LARGE SCALE GENOMIC DNA]</scope>
    <source>
        <strain>ATCC 35602 / DSM 5306 / Rt17-B1</strain>
    </source>
</reference>
<evidence type="ECO:0000255" key="1">
    <source>
        <dbReference type="HAMAP-Rule" id="MF_00382"/>
    </source>
</evidence>
<evidence type="ECO:0000305" key="2"/>
<proteinExistence type="inferred from homology"/>
<keyword id="KW-1185">Reference proteome</keyword>
<keyword id="KW-0687">Ribonucleoprotein</keyword>
<keyword id="KW-0689">Ribosomal protein</keyword>
<keyword id="KW-0694">RNA-binding</keyword>
<keyword id="KW-0699">rRNA-binding</keyword>
<gene>
    <name evidence="1" type="primary">rplT</name>
    <name type="ordered locus">Fnod_0662</name>
</gene>
<feature type="chain" id="PRO_1000072183" description="Large ribosomal subunit protein bL20">
    <location>
        <begin position="1"/>
        <end position="118"/>
    </location>
</feature>